<proteinExistence type="inferred from homology"/>
<accession>A5VP50</accession>
<sequence>MTTHRKPSQEQGFLNGQFLLAMPGMSDERFARSVVYICAHSGEGAMGFIINQLQPVQFPDLLRQIGVIGEEDLIILPDRAQHMVARNGGPVDRTRGFVLHSDDYMVDSTMPVSDDVCLTATVDILRAIYGGGGPERALMALGYSGWAPGQLEMEVAENGWLTCDAPLDMLFDSDIEGKYSRLMLHMGIDMSQLVSDAGHA</sequence>
<dbReference type="EMBL" id="CP000708">
    <property type="protein sequence ID" value="ABQ61266.1"/>
    <property type="molecule type" value="Genomic_DNA"/>
</dbReference>
<dbReference type="RefSeq" id="WP_005978421.1">
    <property type="nucleotide sequence ID" value="NC_009505.1"/>
</dbReference>
<dbReference type="SMR" id="A5VP50"/>
<dbReference type="GeneID" id="45123960"/>
<dbReference type="KEGG" id="bov:BOV_0485"/>
<dbReference type="HOGENOM" id="CLU_057596_1_0_5"/>
<dbReference type="PhylomeDB" id="A5VP50"/>
<dbReference type="Proteomes" id="UP000006383">
    <property type="component" value="Chromosome I"/>
</dbReference>
<dbReference type="GO" id="GO:0005829">
    <property type="term" value="C:cytosol"/>
    <property type="evidence" value="ECO:0007669"/>
    <property type="project" value="TreeGrafter"/>
</dbReference>
<dbReference type="Gene3D" id="3.40.1740.10">
    <property type="entry name" value="VC0467-like"/>
    <property type="match status" value="1"/>
</dbReference>
<dbReference type="HAMAP" id="MF_00758">
    <property type="entry name" value="UPF0301"/>
    <property type="match status" value="1"/>
</dbReference>
<dbReference type="InterPro" id="IPR003774">
    <property type="entry name" value="AlgH-like"/>
</dbReference>
<dbReference type="NCBIfam" id="NF001268">
    <property type="entry name" value="PRK00228.1-4"/>
    <property type="match status" value="1"/>
</dbReference>
<dbReference type="PANTHER" id="PTHR30327">
    <property type="entry name" value="UNCHARACTERIZED PROTEIN YQGE"/>
    <property type="match status" value="1"/>
</dbReference>
<dbReference type="PANTHER" id="PTHR30327:SF1">
    <property type="entry name" value="UPF0301 PROTEIN YQGE"/>
    <property type="match status" value="1"/>
</dbReference>
<dbReference type="Pfam" id="PF02622">
    <property type="entry name" value="DUF179"/>
    <property type="match status" value="1"/>
</dbReference>
<dbReference type="SUPFAM" id="SSF143456">
    <property type="entry name" value="VC0467-like"/>
    <property type="match status" value="1"/>
</dbReference>
<organism>
    <name type="scientific">Brucella ovis (strain ATCC 25840 / 63/290 / NCTC 10512)</name>
    <dbReference type="NCBI Taxonomy" id="444178"/>
    <lineage>
        <taxon>Bacteria</taxon>
        <taxon>Pseudomonadati</taxon>
        <taxon>Pseudomonadota</taxon>
        <taxon>Alphaproteobacteria</taxon>
        <taxon>Hyphomicrobiales</taxon>
        <taxon>Brucellaceae</taxon>
        <taxon>Brucella/Ochrobactrum group</taxon>
        <taxon>Brucella</taxon>
    </lineage>
</organism>
<gene>
    <name type="ordered locus">BOV_0485</name>
</gene>
<protein>
    <recommendedName>
        <fullName evidence="1">UPF0301 protein BOV_0485</fullName>
    </recommendedName>
</protein>
<feature type="chain" id="PRO_1000046642" description="UPF0301 protein BOV_0485">
    <location>
        <begin position="1"/>
        <end position="200"/>
    </location>
</feature>
<comment type="similarity">
    <text evidence="1">Belongs to the UPF0301 (AlgH) family.</text>
</comment>
<name>Y485_BRUO2</name>
<evidence type="ECO:0000255" key="1">
    <source>
        <dbReference type="HAMAP-Rule" id="MF_00758"/>
    </source>
</evidence>
<reference key="1">
    <citation type="journal article" date="2009" name="PLoS ONE">
        <title>Genome degradation in Brucella ovis corresponds with narrowing of its host range and tissue tropism.</title>
        <authorList>
            <person name="Tsolis R.M."/>
            <person name="Seshadri R."/>
            <person name="Santos R.L."/>
            <person name="Sangari F.J."/>
            <person name="Lobo J.M."/>
            <person name="de Jong M.F."/>
            <person name="Ren Q."/>
            <person name="Myers G."/>
            <person name="Brinkac L.M."/>
            <person name="Nelson W.C."/>
            <person name="Deboy R.T."/>
            <person name="Angiuoli S."/>
            <person name="Khouri H."/>
            <person name="Dimitrov G."/>
            <person name="Robinson J.R."/>
            <person name="Mulligan S."/>
            <person name="Walker R.L."/>
            <person name="Elzer P.E."/>
            <person name="Hassan K.A."/>
            <person name="Paulsen I.T."/>
        </authorList>
    </citation>
    <scope>NUCLEOTIDE SEQUENCE [LARGE SCALE GENOMIC DNA]</scope>
    <source>
        <strain>ATCC 25840 / 63/290 / NCTC 10512</strain>
    </source>
</reference>